<name>RPO11_METAC</name>
<keyword id="KW-0963">Cytoplasm</keyword>
<keyword id="KW-0240">DNA-directed RNA polymerase</keyword>
<keyword id="KW-0548">Nucleotidyltransferase</keyword>
<keyword id="KW-1185">Reference proteome</keyword>
<keyword id="KW-0804">Transcription</keyword>
<keyword id="KW-0808">Transferase</keyword>
<organism>
    <name type="scientific">Methanosarcina acetivorans (strain ATCC 35395 / DSM 2834 / JCM 12185 / C2A)</name>
    <dbReference type="NCBI Taxonomy" id="188937"/>
    <lineage>
        <taxon>Archaea</taxon>
        <taxon>Methanobacteriati</taxon>
        <taxon>Methanobacteriota</taxon>
        <taxon>Stenosarchaea group</taxon>
        <taxon>Methanomicrobia</taxon>
        <taxon>Methanosarcinales</taxon>
        <taxon>Methanosarcinaceae</taxon>
        <taxon>Methanosarcina</taxon>
    </lineage>
</organism>
<comment type="function">
    <text evidence="1">DNA-dependent RNA polymerase (RNAP) catalyzes the transcription of DNA into RNA using the four ribonucleoside triphosphates as substrates.</text>
</comment>
<comment type="catalytic activity">
    <reaction evidence="1">
        <text>RNA(n) + a ribonucleoside 5'-triphosphate = RNA(n+1) + diphosphate</text>
        <dbReference type="Rhea" id="RHEA:21248"/>
        <dbReference type="Rhea" id="RHEA-COMP:14527"/>
        <dbReference type="Rhea" id="RHEA-COMP:17342"/>
        <dbReference type="ChEBI" id="CHEBI:33019"/>
        <dbReference type="ChEBI" id="CHEBI:61557"/>
        <dbReference type="ChEBI" id="CHEBI:140395"/>
        <dbReference type="EC" id="2.7.7.6"/>
    </reaction>
</comment>
<comment type="subunit">
    <text evidence="1">Part of the RNA polymerase complex.</text>
</comment>
<comment type="subcellular location">
    <subcellularLocation>
        <location evidence="1">Cytoplasm</location>
    </subcellularLocation>
</comment>
<comment type="similarity">
    <text evidence="1">Belongs to the archaeal Rpo11/eukaryotic RPB11/RPC19 RNA polymerase subunit family.</text>
</comment>
<sequence>MELNILNKTNNELEVELRGETHTLLNLLKDLLIKDERVEAAFYDMKHVSISDPILYIKTDGTDPILVLKETAAIIIAQCDEFIDVFSKAANA</sequence>
<evidence type="ECO:0000255" key="1">
    <source>
        <dbReference type="HAMAP-Rule" id="MF_00261"/>
    </source>
</evidence>
<dbReference type="EC" id="2.7.7.6" evidence="1"/>
<dbReference type="EMBL" id="AE010299">
    <property type="protein sequence ID" value="AAM04161.1"/>
    <property type="molecule type" value="Genomic_DNA"/>
</dbReference>
<dbReference type="RefSeq" id="WP_011020766.1">
    <property type="nucleotide sequence ID" value="NC_003552.1"/>
</dbReference>
<dbReference type="SMR" id="Q8TSS4"/>
<dbReference type="FunCoup" id="Q8TSS4">
    <property type="interactions" value="11"/>
</dbReference>
<dbReference type="STRING" id="188937.MA_0721"/>
<dbReference type="EnsemblBacteria" id="AAM04161">
    <property type="protein sequence ID" value="AAM04161"/>
    <property type="gene ID" value="MA_0721"/>
</dbReference>
<dbReference type="GeneID" id="1472613"/>
<dbReference type="KEGG" id="mac:MA_0721"/>
<dbReference type="HOGENOM" id="CLU_090381_5_3_2"/>
<dbReference type="InParanoid" id="Q8TSS4"/>
<dbReference type="OrthoDB" id="24205at2157"/>
<dbReference type="PhylomeDB" id="Q8TSS4"/>
<dbReference type="Proteomes" id="UP000002487">
    <property type="component" value="Chromosome"/>
</dbReference>
<dbReference type="GO" id="GO:0005737">
    <property type="term" value="C:cytoplasm"/>
    <property type="evidence" value="ECO:0007669"/>
    <property type="project" value="UniProtKB-SubCell"/>
</dbReference>
<dbReference type="GO" id="GO:0000428">
    <property type="term" value="C:DNA-directed RNA polymerase complex"/>
    <property type="evidence" value="ECO:0007669"/>
    <property type="project" value="UniProtKB-KW"/>
</dbReference>
<dbReference type="GO" id="GO:0003677">
    <property type="term" value="F:DNA binding"/>
    <property type="evidence" value="ECO:0007669"/>
    <property type="project" value="InterPro"/>
</dbReference>
<dbReference type="GO" id="GO:0003899">
    <property type="term" value="F:DNA-directed RNA polymerase activity"/>
    <property type="evidence" value="ECO:0007669"/>
    <property type="project" value="UniProtKB-UniRule"/>
</dbReference>
<dbReference type="GO" id="GO:0046983">
    <property type="term" value="F:protein dimerization activity"/>
    <property type="evidence" value="ECO:0007669"/>
    <property type="project" value="InterPro"/>
</dbReference>
<dbReference type="GO" id="GO:0006351">
    <property type="term" value="P:DNA-templated transcription"/>
    <property type="evidence" value="ECO:0007669"/>
    <property type="project" value="UniProtKB-UniRule"/>
</dbReference>
<dbReference type="CDD" id="cd06927">
    <property type="entry name" value="RNAP_L"/>
    <property type="match status" value="1"/>
</dbReference>
<dbReference type="Gene3D" id="3.30.1360.10">
    <property type="entry name" value="RNA polymerase, RBP11-like subunit"/>
    <property type="match status" value="1"/>
</dbReference>
<dbReference type="HAMAP" id="MF_00261">
    <property type="entry name" value="RNApol_arch_Rpo11"/>
    <property type="match status" value="1"/>
</dbReference>
<dbReference type="InterPro" id="IPR036603">
    <property type="entry name" value="RBP11-like"/>
</dbReference>
<dbReference type="InterPro" id="IPR009025">
    <property type="entry name" value="RBP11-like_dimer"/>
</dbReference>
<dbReference type="InterPro" id="IPR008193">
    <property type="entry name" value="RNA_pol_Rpb11_13-16kDa_CS"/>
</dbReference>
<dbReference type="InterPro" id="IPR022905">
    <property type="entry name" value="Rpo11-like"/>
</dbReference>
<dbReference type="NCBIfam" id="NF002237">
    <property type="entry name" value="PRK01146.2-1"/>
    <property type="match status" value="1"/>
</dbReference>
<dbReference type="PANTHER" id="PTHR13946">
    <property type="entry name" value="DNA-DIRECTED RNA POLYMERASE I,II,III"/>
    <property type="match status" value="1"/>
</dbReference>
<dbReference type="PANTHER" id="PTHR13946:SF28">
    <property type="entry name" value="DNA-DIRECTED RNA POLYMERASES I AND III SUBUNIT RPAC2"/>
    <property type="match status" value="1"/>
</dbReference>
<dbReference type="Pfam" id="PF13656">
    <property type="entry name" value="RNA_pol_L_2"/>
    <property type="match status" value="1"/>
</dbReference>
<dbReference type="SUPFAM" id="SSF55257">
    <property type="entry name" value="RBP11-like subunits of RNA polymerase"/>
    <property type="match status" value="1"/>
</dbReference>
<dbReference type="PROSITE" id="PS01154">
    <property type="entry name" value="RNA_POL_L_13KD"/>
    <property type="match status" value="1"/>
</dbReference>
<proteinExistence type="inferred from homology"/>
<accession>Q8TSS4</accession>
<gene>
    <name evidence="1" type="primary">rpo11</name>
    <name evidence="1" type="synonym">rpoL</name>
    <name type="ordered locus">MA_0721</name>
</gene>
<feature type="chain" id="PRO_0000149325" description="DNA-directed RNA polymerase subunit Rpo11">
    <location>
        <begin position="1"/>
        <end position="92"/>
    </location>
</feature>
<protein>
    <recommendedName>
        <fullName evidence="1">DNA-directed RNA polymerase subunit Rpo11</fullName>
        <ecNumber evidence="1">2.7.7.6</ecNumber>
    </recommendedName>
    <alternativeName>
        <fullName evidence="1">DNA-directed RNA polymerase subunit L</fullName>
    </alternativeName>
</protein>
<reference key="1">
    <citation type="journal article" date="2002" name="Genome Res.">
        <title>The genome of Methanosarcina acetivorans reveals extensive metabolic and physiological diversity.</title>
        <authorList>
            <person name="Galagan J.E."/>
            <person name="Nusbaum C."/>
            <person name="Roy A."/>
            <person name="Endrizzi M.G."/>
            <person name="Macdonald P."/>
            <person name="FitzHugh W."/>
            <person name="Calvo S."/>
            <person name="Engels R."/>
            <person name="Smirnov S."/>
            <person name="Atnoor D."/>
            <person name="Brown A."/>
            <person name="Allen N."/>
            <person name="Naylor J."/>
            <person name="Stange-Thomann N."/>
            <person name="DeArellano K."/>
            <person name="Johnson R."/>
            <person name="Linton L."/>
            <person name="McEwan P."/>
            <person name="McKernan K."/>
            <person name="Talamas J."/>
            <person name="Tirrell A."/>
            <person name="Ye W."/>
            <person name="Zimmer A."/>
            <person name="Barber R.D."/>
            <person name="Cann I."/>
            <person name="Graham D.E."/>
            <person name="Grahame D.A."/>
            <person name="Guss A.M."/>
            <person name="Hedderich R."/>
            <person name="Ingram-Smith C."/>
            <person name="Kuettner H.C."/>
            <person name="Krzycki J.A."/>
            <person name="Leigh J.A."/>
            <person name="Li W."/>
            <person name="Liu J."/>
            <person name="Mukhopadhyay B."/>
            <person name="Reeve J.N."/>
            <person name="Smith K."/>
            <person name="Springer T.A."/>
            <person name="Umayam L.A."/>
            <person name="White O."/>
            <person name="White R.H."/>
            <person name="de Macario E.C."/>
            <person name="Ferry J.G."/>
            <person name="Jarrell K.F."/>
            <person name="Jing H."/>
            <person name="Macario A.J.L."/>
            <person name="Paulsen I.T."/>
            <person name="Pritchett M."/>
            <person name="Sowers K.R."/>
            <person name="Swanson R.V."/>
            <person name="Zinder S.H."/>
            <person name="Lander E."/>
            <person name="Metcalf W.W."/>
            <person name="Birren B."/>
        </authorList>
    </citation>
    <scope>NUCLEOTIDE SEQUENCE [LARGE SCALE GENOMIC DNA]</scope>
    <source>
        <strain>ATCC 35395 / DSM 2834 / JCM 12185 / C2A</strain>
    </source>
</reference>